<dbReference type="EC" id="6.3.4.4" evidence="2"/>
<dbReference type="EMBL" id="AABL01000938">
    <property type="protein sequence ID" value="EAA22862.1"/>
    <property type="molecule type" value="Genomic_DNA"/>
</dbReference>
<dbReference type="SMR" id="Q7RJF9"/>
<dbReference type="FunCoup" id="Q7RJF9">
    <property type="interactions" value="314"/>
</dbReference>
<dbReference type="STRING" id="73239.Q7RJF9"/>
<dbReference type="PaxDb" id="73239-Q7RJF9"/>
<dbReference type="EnsemblProtists" id="EAA22862">
    <property type="protein sequence ID" value="EAA22862"/>
    <property type="gene ID" value="EAA22862"/>
</dbReference>
<dbReference type="KEGG" id="pyo:PY17X_1132500"/>
<dbReference type="VEuPathDB" id="PlasmoDB:Py17XNL_001105720"/>
<dbReference type="InParanoid" id="Q7RJF9"/>
<dbReference type="UniPathway" id="UPA00075">
    <property type="reaction ID" value="UER00335"/>
</dbReference>
<dbReference type="Proteomes" id="UP000008553">
    <property type="component" value="Unassembled WGS sequence"/>
</dbReference>
<dbReference type="GO" id="GO:0005737">
    <property type="term" value="C:cytoplasm"/>
    <property type="evidence" value="ECO:0007669"/>
    <property type="project" value="UniProtKB-SubCell"/>
</dbReference>
<dbReference type="GO" id="GO:0004019">
    <property type="term" value="F:adenylosuccinate synthase activity"/>
    <property type="evidence" value="ECO:0007669"/>
    <property type="project" value="UniProtKB-UniRule"/>
</dbReference>
<dbReference type="GO" id="GO:0005525">
    <property type="term" value="F:GTP binding"/>
    <property type="evidence" value="ECO:0007669"/>
    <property type="project" value="UniProtKB-UniRule"/>
</dbReference>
<dbReference type="GO" id="GO:0000287">
    <property type="term" value="F:magnesium ion binding"/>
    <property type="evidence" value="ECO:0007669"/>
    <property type="project" value="UniProtKB-UniRule"/>
</dbReference>
<dbReference type="GO" id="GO:0044208">
    <property type="term" value="P:'de novo' AMP biosynthetic process"/>
    <property type="evidence" value="ECO:0007669"/>
    <property type="project" value="UniProtKB-UniRule"/>
</dbReference>
<dbReference type="GO" id="GO:0046040">
    <property type="term" value="P:IMP metabolic process"/>
    <property type="evidence" value="ECO:0007669"/>
    <property type="project" value="TreeGrafter"/>
</dbReference>
<dbReference type="CDD" id="cd03108">
    <property type="entry name" value="AdSS"/>
    <property type="match status" value="1"/>
</dbReference>
<dbReference type="FunFam" id="1.10.300.10:FF:000001">
    <property type="entry name" value="Adenylosuccinate synthetase"/>
    <property type="match status" value="1"/>
</dbReference>
<dbReference type="FunFam" id="3.90.170.10:FF:000001">
    <property type="entry name" value="Adenylosuccinate synthetase"/>
    <property type="match status" value="1"/>
</dbReference>
<dbReference type="Gene3D" id="3.40.440.10">
    <property type="entry name" value="Adenylosuccinate Synthetase, subunit A, domain 1"/>
    <property type="match status" value="1"/>
</dbReference>
<dbReference type="Gene3D" id="1.10.300.10">
    <property type="entry name" value="Adenylosuccinate Synthetase, subunit A, domain 2"/>
    <property type="match status" value="1"/>
</dbReference>
<dbReference type="Gene3D" id="3.90.170.10">
    <property type="entry name" value="Adenylosuccinate Synthetase, subunit A, domain 3"/>
    <property type="match status" value="1"/>
</dbReference>
<dbReference type="HAMAP" id="MF_00011">
    <property type="entry name" value="Adenylosucc_synth"/>
    <property type="match status" value="1"/>
</dbReference>
<dbReference type="InterPro" id="IPR018220">
    <property type="entry name" value="Adenylosuccin_syn_GTP-bd"/>
</dbReference>
<dbReference type="InterPro" id="IPR033128">
    <property type="entry name" value="Adenylosuccin_syn_Lys_AS"/>
</dbReference>
<dbReference type="InterPro" id="IPR042109">
    <property type="entry name" value="Adenylosuccinate_synth_dom1"/>
</dbReference>
<dbReference type="InterPro" id="IPR042110">
    <property type="entry name" value="Adenylosuccinate_synth_dom2"/>
</dbReference>
<dbReference type="InterPro" id="IPR042111">
    <property type="entry name" value="Adenylosuccinate_synth_dom3"/>
</dbReference>
<dbReference type="InterPro" id="IPR001114">
    <property type="entry name" value="Adenylosuccinate_synthetase"/>
</dbReference>
<dbReference type="InterPro" id="IPR027417">
    <property type="entry name" value="P-loop_NTPase"/>
</dbReference>
<dbReference type="NCBIfam" id="NF002223">
    <property type="entry name" value="PRK01117.1"/>
    <property type="match status" value="1"/>
</dbReference>
<dbReference type="NCBIfam" id="TIGR00184">
    <property type="entry name" value="purA"/>
    <property type="match status" value="1"/>
</dbReference>
<dbReference type="PANTHER" id="PTHR11846">
    <property type="entry name" value="ADENYLOSUCCINATE SYNTHETASE"/>
    <property type="match status" value="1"/>
</dbReference>
<dbReference type="PANTHER" id="PTHR11846:SF0">
    <property type="entry name" value="ADENYLOSUCCINATE SYNTHETASE"/>
    <property type="match status" value="1"/>
</dbReference>
<dbReference type="Pfam" id="PF00709">
    <property type="entry name" value="Adenylsucc_synt"/>
    <property type="match status" value="1"/>
</dbReference>
<dbReference type="SMART" id="SM00788">
    <property type="entry name" value="Adenylsucc_synt"/>
    <property type="match status" value="1"/>
</dbReference>
<dbReference type="SUPFAM" id="SSF52540">
    <property type="entry name" value="P-loop containing nucleoside triphosphate hydrolases"/>
    <property type="match status" value="1"/>
</dbReference>
<dbReference type="PROSITE" id="PS01266">
    <property type="entry name" value="ADENYLOSUCCIN_SYN_1"/>
    <property type="match status" value="1"/>
</dbReference>
<dbReference type="PROSITE" id="PS00513">
    <property type="entry name" value="ADENYLOSUCCIN_SYN_2"/>
    <property type="match status" value="1"/>
</dbReference>
<proteinExistence type="inferred from homology"/>
<gene>
    <name type="ORF">PY03301</name>
</gene>
<reference key="1">
    <citation type="journal article" date="2002" name="Nature">
        <title>Genome sequence and comparative analysis of the model rodent malaria parasite Plasmodium yoelii yoelii.</title>
        <authorList>
            <person name="Carlton J.M."/>
            <person name="Angiuoli S.V."/>
            <person name="Suh B.B."/>
            <person name="Kooij T.W."/>
            <person name="Pertea M."/>
            <person name="Silva J.C."/>
            <person name="Ermolaeva M.D."/>
            <person name="Allen J.E."/>
            <person name="Selengut J.D."/>
            <person name="Koo H.L."/>
            <person name="Peterson J.D."/>
            <person name="Pop M."/>
            <person name="Kosack D.S."/>
            <person name="Shumway M.F."/>
            <person name="Bidwell S.L."/>
            <person name="Shallom S.J."/>
            <person name="van Aken S.E."/>
            <person name="Riedmuller S.B."/>
            <person name="Feldblyum T.V."/>
            <person name="Cho J.K."/>
            <person name="Quackenbush J."/>
            <person name="Sedegah M."/>
            <person name="Shoaibi A."/>
            <person name="Cummings L.M."/>
            <person name="Florens L."/>
            <person name="Yates J.R. III"/>
            <person name="Raine J.D."/>
            <person name="Sinden R.E."/>
            <person name="Harris M.A."/>
            <person name="Cunningham D.A."/>
            <person name="Preiser P.R."/>
            <person name="Bergman L.W."/>
            <person name="Vaidya A.B."/>
            <person name="van Lin L.H."/>
            <person name="Janse C.J."/>
            <person name="Waters A.P."/>
            <person name="Smith H.O."/>
            <person name="White O.R."/>
            <person name="Salzberg S.L."/>
            <person name="Venter J.C."/>
            <person name="Fraser C.M."/>
            <person name="Hoffman S.L."/>
            <person name="Gardner M.J."/>
            <person name="Carucci D.J."/>
        </authorList>
    </citation>
    <scope>NUCLEOTIDE SEQUENCE [LARGE SCALE GENOMIC DNA]</scope>
    <source>
        <strain>17XNL</strain>
    </source>
</reference>
<sequence>MNIFEHSIKNVDKGNVVAIVGTQWGDEGKGKIIDILSKYSDITCRFNGGGNAGHTICVGNKKHALHLLPCGVLYENNINILGNCMVIHLKTLMKEINNLGNNILDRIYISEKAHILFDIHQEIDAIQETRKSKDGNAIGTTKKGIGPCYSTKASRIGIRMGSLRNFENFKKLYIKLIDNLMDLYNIKDYNKEEELNEFYTYHKILKDKIINIISYINKSIDSKKYILIEGANAAMLDIDLGTYPFVTSSSTTLGGIFSGLGIHHKKLNLVVGVVKSYLTRVGSGPFLTEQCNEIGEYLTKKGFEYGTTTNRPRRCGWLDLPMLFYVKYINCIDIINLTKLDVLSGLKEIYVCVDYKNKTTGELLERGSYPLEDEQLREYEPVYEKFEGWDEDITNCIEFDELPENAKKYVLTIESYIKTPIVWVGVGPTRDNTITRKFD</sequence>
<evidence type="ECO:0000250" key="1"/>
<evidence type="ECO:0000255" key="2">
    <source>
        <dbReference type="HAMAP-Rule" id="MF_03125"/>
    </source>
</evidence>
<comment type="function">
    <text evidence="1">Plays an important role in the salvage pathway for purine nucleotide biosynthesis. Catalyzes the first committed step in the biosynthesis of AMP from IMP (By similarity).</text>
</comment>
<comment type="catalytic activity">
    <reaction evidence="2">
        <text>IMP + L-aspartate + GTP = N(6)-(1,2-dicarboxyethyl)-AMP + GDP + phosphate + 2 H(+)</text>
        <dbReference type="Rhea" id="RHEA:15753"/>
        <dbReference type="ChEBI" id="CHEBI:15378"/>
        <dbReference type="ChEBI" id="CHEBI:29991"/>
        <dbReference type="ChEBI" id="CHEBI:37565"/>
        <dbReference type="ChEBI" id="CHEBI:43474"/>
        <dbReference type="ChEBI" id="CHEBI:57567"/>
        <dbReference type="ChEBI" id="CHEBI:58053"/>
        <dbReference type="ChEBI" id="CHEBI:58189"/>
        <dbReference type="EC" id="6.3.4.4"/>
    </reaction>
</comment>
<comment type="cofactor">
    <cofactor evidence="2">
        <name>Mg(2+)</name>
        <dbReference type="ChEBI" id="CHEBI:18420"/>
    </cofactor>
    <text evidence="2">Binds 1 Mg(2+) ion per subunit.</text>
</comment>
<comment type="pathway">
    <text evidence="2">Purine metabolism; AMP biosynthesis via de novo pathway; AMP from IMP: step 1/2.</text>
</comment>
<comment type="subunit">
    <text evidence="2">Homodimer.</text>
</comment>
<comment type="subcellular location">
    <subcellularLocation>
        <location evidence="2">Cytoplasm</location>
    </subcellularLocation>
</comment>
<comment type="miscellaneous">
    <text>Parasitic protozoa lack the de novo purine biosynthesis pathway and rely exclusively on the salvage pathway for their purine nucleotide requirements.</text>
</comment>
<comment type="similarity">
    <text evidence="2">Belongs to the adenylosuccinate synthetase family.</text>
</comment>
<keyword id="KW-0963">Cytoplasm</keyword>
<keyword id="KW-0342">GTP-binding</keyword>
<keyword id="KW-0436">Ligase</keyword>
<keyword id="KW-0460">Magnesium</keyword>
<keyword id="KW-0479">Metal-binding</keyword>
<keyword id="KW-0547">Nucleotide-binding</keyword>
<keyword id="KW-0658">Purine biosynthesis</keyword>
<keyword id="KW-1185">Reference proteome</keyword>
<name>PURA_PLAYO</name>
<protein>
    <recommendedName>
        <fullName evidence="2">Adenylosuccinate synthetase</fullName>
        <shortName evidence="2">AMPSase</shortName>
        <shortName evidence="2">AdSS</shortName>
        <ecNumber evidence="2">6.3.4.4</ecNumber>
    </recommendedName>
    <alternativeName>
        <fullName evidence="2">IMP--aspartate ligase</fullName>
    </alternativeName>
</protein>
<accession>Q7RJF9</accession>
<feature type="chain" id="PRO_0000399297" description="Adenylosuccinate synthetase">
    <location>
        <begin position="1"/>
        <end position="439"/>
    </location>
</feature>
<feature type="active site" description="Proton acceptor" evidence="2">
    <location>
        <position position="26"/>
    </location>
</feature>
<feature type="active site" description="Proton donor" evidence="2">
    <location>
        <position position="54"/>
    </location>
</feature>
<feature type="binding site" evidence="2">
    <location>
        <begin position="25"/>
        <end position="31"/>
    </location>
    <ligand>
        <name>GTP</name>
        <dbReference type="ChEBI" id="CHEBI:37565"/>
    </ligand>
</feature>
<feature type="binding site" description="in other chain" evidence="2">
    <location>
        <begin position="26"/>
        <end position="29"/>
    </location>
    <ligand>
        <name>IMP</name>
        <dbReference type="ChEBI" id="CHEBI:58053"/>
        <note>ligand shared between dimeric partners</note>
    </ligand>
</feature>
<feature type="binding site" evidence="2">
    <location>
        <position position="26"/>
    </location>
    <ligand>
        <name>Mg(2+)</name>
        <dbReference type="ChEBI" id="CHEBI:18420"/>
    </ligand>
</feature>
<feature type="binding site" description="in other chain" evidence="2">
    <location>
        <begin position="51"/>
        <end position="54"/>
    </location>
    <ligand>
        <name>IMP</name>
        <dbReference type="ChEBI" id="CHEBI:58053"/>
        <note>ligand shared between dimeric partners</note>
    </ligand>
</feature>
<feature type="binding site" evidence="2">
    <location>
        <begin position="53"/>
        <end position="55"/>
    </location>
    <ligand>
        <name>GTP</name>
        <dbReference type="ChEBI" id="CHEBI:37565"/>
    </ligand>
</feature>
<feature type="binding site" evidence="2">
    <location>
        <position position="53"/>
    </location>
    <ligand>
        <name>Mg(2+)</name>
        <dbReference type="ChEBI" id="CHEBI:18420"/>
    </ligand>
</feature>
<feature type="binding site" evidence="2">
    <location>
        <position position="62"/>
    </location>
    <ligand>
        <name>GTP</name>
        <dbReference type="ChEBI" id="CHEBI:37565"/>
    </ligand>
</feature>
<feature type="binding site" description="in other chain" evidence="2">
    <location>
        <position position="141"/>
    </location>
    <ligand>
        <name>IMP</name>
        <dbReference type="ChEBI" id="CHEBI:58053"/>
        <note>ligand shared between dimeric partners</note>
    </ligand>
</feature>
<feature type="binding site" evidence="2">
    <location>
        <position position="155"/>
    </location>
    <ligand>
        <name>IMP</name>
        <dbReference type="ChEBI" id="CHEBI:58053"/>
        <note>ligand shared between dimeric partners</note>
    </ligand>
</feature>
<feature type="binding site" description="in other chain" evidence="2">
    <location>
        <position position="232"/>
    </location>
    <ligand>
        <name>IMP</name>
        <dbReference type="ChEBI" id="CHEBI:58053"/>
        <note>ligand shared between dimeric partners</note>
    </ligand>
</feature>
<feature type="binding site" description="in other chain" evidence="2">
    <location>
        <position position="247"/>
    </location>
    <ligand>
        <name>IMP</name>
        <dbReference type="ChEBI" id="CHEBI:58053"/>
        <note>ligand shared between dimeric partners</note>
    </ligand>
</feature>
<feature type="binding site" evidence="2">
    <location>
        <begin position="307"/>
        <end position="313"/>
    </location>
    <ligand>
        <name>substrate</name>
    </ligand>
</feature>
<feature type="binding site" evidence="2">
    <location>
        <position position="307"/>
    </location>
    <ligand>
        <name>GTP</name>
        <dbReference type="ChEBI" id="CHEBI:37565"/>
    </ligand>
</feature>
<feature type="binding site" description="in other chain" evidence="2">
    <location>
        <position position="311"/>
    </location>
    <ligand>
        <name>IMP</name>
        <dbReference type="ChEBI" id="CHEBI:58053"/>
        <note>ligand shared between dimeric partners</note>
    </ligand>
</feature>
<feature type="binding site" evidence="2">
    <location>
        <position position="313"/>
    </location>
    <ligand>
        <name>GTP</name>
        <dbReference type="ChEBI" id="CHEBI:37565"/>
    </ligand>
</feature>
<feature type="binding site" evidence="2">
    <location>
        <begin position="339"/>
        <end position="341"/>
    </location>
    <ligand>
        <name>GTP</name>
        <dbReference type="ChEBI" id="CHEBI:37565"/>
    </ligand>
</feature>
<feature type="binding site" evidence="2">
    <location>
        <begin position="425"/>
        <end position="427"/>
    </location>
    <ligand>
        <name>GTP</name>
        <dbReference type="ChEBI" id="CHEBI:37565"/>
    </ligand>
</feature>
<organism>
    <name type="scientific">Plasmodium yoelii yoelii</name>
    <dbReference type="NCBI Taxonomy" id="73239"/>
    <lineage>
        <taxon>Eukaryota</taxon>
        <taxon>Sar</taxon>
        <taxon>Alveolata</taxon>
        <taxon>Apicomplexa</taxon>
        <taxon>Aconoidasida</taxon>
        <taxon>Haemosporida</taxon>
        <taxon>Plasmodiidae</taxon>
        <taxon>Plasmodium</taxon>
        <taxon>Plasmodium (Vinckeia)</taxon>
    </lineage>
</organism>